<accession>Q8DSG3</accession>
<sequence length="583" mass="66163">MKELFIGNYGLEQVGQKVTAKGWVANIRNHGKLAFIELRDREGLLQVFVDSAVADFDKLHDLHKESILAVTGEIVARDERFVNPHIKSGQVELRAETIEIIASSKLLPFELDNHAHAGEDIRQKYRYLDLRREKMTANLKLRHQVTKAIRDYLNQADFIDVETPYLTKSTPEGARDFLVPSRVFKNQFYALPQSPQMLKQLLMGAGLERYYQIVRCFRDEDLRGDRQPEFTQVDLEMSFVSEEDVRNLVEGMLKAVVKASKGIELTEAFPIISYAQAMRRFGSDKPDTRFAMELKDLTELSRGNTSLFLQKGLKKENGVVMGICAKNAAKAFTNRQMATLKQLVMDFGVAGFATATIEKGQVTGSLKSTFKDHNTELLELFEAEDGDMIFFVTGSLKRVQEALGGLRVRLAKDLELIDNDKLNFLWVVDWPLLEWNEDLNRYQAMHHPFTQGAFEDGSDWKENPEKMMSRAYDIVLNGYEIGGGSLRIHKRSAQEAMFELLGMKKEDYERDFGFFLEALEYGFPPHGGLALGLDRLVMILAEEGNIREVIAFPKNGQGADAMLESPSLVADQQLAELRLALRD</sequence>
<dbReference type="EC" id="6.1.1.23" evidence="1"/>
<dbReference type="EMBL" id="AE014133">
    <property type="protein sequence ID" value="AAN59447.1"/>
    <property type="molecule type" value="Genomic_DNA"/>
</dbReference>
<dbReference type="RefSeq" id="NP_722141.1">
    <property type="nucleotide sequence ID" value="NC_004350.2"/>
</dbReference>
<dbReference type="SMR" id="Q8DSG3"/>
<dbReference type="STRING" id="210007.SMU_1822"/>
<dbReference type="KEGG" id="smu:SMU_1822"/>
<dbReference type="PATRIC" id="fig|210007.7.peg.1627"/>
<dbReference type="eggNOG" id="COG0173">
    <property type="taxonomic scope" value="Bacteria"/>
</dbReference>
<dbReference type="HOGENOM" id="CLU_014330_3_2_9"/>
<dbReference type="OrthoDB" id="9802326at2"/>
<dbReference type="PhylomeDB" id="Q8DSG3"/>
<dbReference type="Proteomes" id="UP000002512">
    <property type="component" value="Chromosome"/>
</dbReference>
<dbReference type="GO" id="GO:0005737">
    <property type="term" value="C:cytoplasm"/>
    <property type="evidence" value="ECO:0007669"/>
    <property type="project" value="UniProtKB-SubCell"/>
</dbReference>
<dbReference type="GO" id="GO:0004815">
    <property type="term" value="F:aspartate-tRNA ligase activity"/>
    <property type="evidence" value="ECO:0007669"/>
    <property type="project" value="UniProtKB-UniRule"/>
</dbReference>
<dbReference type="GO" id="GO:0050560">
    <property type="term" value="F:aspartate-tRNA(Asn) ligase activity"/>
    <property type="evidence" value="ECO:0007669"/>
    <property type="project" value="UniProtKB-EC"/>
</dbReference>
<dbReference type="GO" id="GO:0005524">
    <property type="term" value="F:ATP binding"/>
    <property type="evidence" value="ECO:0007669"/>
    <property type="project" value="UniProtKB-UniRule"/>
</dbReference>
<dbReference type="GO" id="GO:0140096">
    <property type="term" value="F:catalytic activity, acting on a protein"/>
    <property type="evidence" value="ECO:0007669"/>
    <property type="project" value="UniProtKB-ARBA"/>
</dbReference>
<dbReference type="GO" id="GO:0003676">
    <property type="term" value="F:nucleic acid binding"/>
    <property type="evidence" value="ECO:0007669"/>
    <property type="project" value="InterPro"/>
</dbReference>
<dbReference type="GO" id="GO:0016740">
    <property type="term" value="F:transferase activity"/>
    <property type="evidence" value="ECO:0007669"/>
    <property type="project" value="UniProtKB-ARBA"/>
</dbReference>
<dbReference type="GO" id="GO:0006422">
    <property type="term" value="P:aspartyl-tRNA aminoacylation"/>
    <property type="evidence" value="ECO:0007669"/>
    <property type="project" value="UniProtKB-UniRule"/>
</dbReference>
<dbReference type="CDD" id="cd00777">
    <property type="entry name" value="AspRS_core"/>
    <property type="match status" value="1"/>
</dbReference>
<dbReference type="CDD" id="cd04317">
    <property type="entry name" value="EcAspRS_like_N"/>
    <property type="match status" value="1"/>
</dbReference>
<dbReference type="Gene3D" id="3.30.930.10">
    <property type="entry name" value="Bira Bifunctional Protein, Domain 2"/>
    <property type="match status" value="1"/>
</dbReference>
<dbReference type="Gene3D" id="3.30.1360.30">
    <property type="entry name" value="GAD-like domain"/>
    <property type="match status" value="1"/>
</dbReference>
<dbReference type="Gene3D" id="2.40.50.140">
    <property type="entry name" value="Nucleic acid-binding proteins"/>
    <property type="match status" value="1"/>
</dbReference>
<dbReference type="HAMAP" id="MF_00044">
    <property type="entry name" value="Asp_tRNA_synth_type1"/>
    <property type="match status" value="1"/>
</dbReference>
<dbReference type="InterPro" id="IPR004364">
    <property type="entry name" value="Aa-tRNA-synt_II"/>
</dbReference>
<dbReference type="InterPro" id="IPR006195">
    <property type="entry name" value="aa-tRNA-synth_II"/>
</dbReference>
<dbReference type="InterPro" id="IPR045864">
    <property type="entry name" value="aa-tRNA-synth_II/BPL/LPL"/>
</dbReference>
<dbReference type="InterPro" id="IPR004524">
    <property type="entry name" value="Asp-tRNA-ligase_1"/>
</dbReference>
<dbReference type="InterPro" id="IPR047089">
    <property type="entry name" value="Asp-tRNA-ligase_1_N"/>
</dbReference>
<dbReference type="InterPro" id="IPR002312">
    <property type="entry name" value="Asp/Asn-tRNA-synth_IIb"/>
</dbReference>
<dbReference type="InterPro" id="IPR047090">
    <property type="entry name" value="AspRS_core"/>
</dbReference>
<dbReference type="InterPro" id="IPR004115">
    <property type="entry name" value="GAD-like_sf"/>
</dbReference>
<dbReference type="InterPro" id="IPR029351">
    <property type="entry name" value="GAD_dom"/>
</dbReference>
<dbReference type="InterPro" id="IPR012340">
    <property type="entry name" value="NA-bd_OB-fold"/>
</dbReference>
<dbReference type="InterPro" id="IPR004365">
    <property type="entry name" value="NA-bd_OB_tRNA"/>
</dbReference>
<dbReference type="NCBIfam" id="TIGR00459">
    <property type="entry name" value="aspS_bact"/>
    <property type="match status" value="1"/>
</dbReference>
<dbReference type="NCBIfam" id="NF001750">
    <property type="entry name" value="PRK00476.1"/>
    <property type="match status" value="1"/>
</dbReference>
<dbReference type="PANTHER" id="PTHR22594:SF5">
    <property type="entry name" value="ASPARTATE--TRNA LIGASE, MITOCHONDRIAL"/>
    <property type="match status" value="1"/>
</dbReference>
<dbReference type="PANTHER" id="PTHR22594">
    <property type="entry name" value="ASPARTYL/LYSYL-TRNA SYNTHETASE"/>
    <property type="match status" value="1"/>
</dbReference>
<dbReference type="Pfam" id="PF02938">
    <property type="entry name" value="GAD"/>
    <property type="match status" value="1"/>
</dbReference>
<dbReference type="Pfam" id="PF00152">
    <property type="entry name" value="tRNA-synt_2"/>
    <property type="match status" value="1"/>
</dbReference>
<dbReference type="Pfam" id="PF01336">
    <property type="entry name" value="tRNA_anti-codon"/>
    <property type="match status" value="1"/>
</dbReference>
<dbReference type="PRINTS" id="PR01042">
    <property type="entry name" value="TRNASYNTHASP"/>
</dbReference>
<dbReference type="SUPFAM" id="SSF55681">
    <property type="entry name" value="Class II aaRS and biotin synthetases"/>
    <property type="match status" value="1"/>
</dbReference>
<dbReference type="SUPFAM" id="SSF55261">
    <property type="entry name" value="GAD domain-like"/>
    <property type="match status" value="1"/>
</dbReference>
<dbReference type="SUPFAM" id="SSF50249">
    <property type="entry name" value="Nucleic acid-binding proteins"/>
    <property type="match status" value="1"/>
</dbReference>
<dbReference type="PROSITE" id="PS50862">
    <property type="entry name" value="AA_TRNA_LIGASE_II"/>
    <property type="match status" value="1"/>
</dbReference>
<proteinExistence type="inferred from homology"/>
<name>SYDND_STRMU</name>
<keyword id="KW-0030">Aminoacyl-tRNA synthetase</keyword>
<keyword id="KW-0067">ATP-binding</keyword>
<keyword id="KW-0963">Cytoplasm</keyword>
<keyword id="KW-0436">Ligase</keyword>
<keyword id="KW-0547">Nucleotide-binding</keyword>
<keyword id="KW-0648">Protein biosynthesis</keyword>
<keyword id="KW-1185">Reference proteome</keyword>
<feature type="chain" id="PRO_0000110953" description="Aspartate--tRNA(Asp/Asn) ligase">
    <location>
        <begin position="1"/>
        <end position="583"/>
    </location>
</feature>
<feature type="region of interest" description="Aspartate" evidence="1">
    <location>
        <begin position="196"/>
        <end position="199"/>
    </location>
</feature>
<feature type="binding site" evidence="1">
    <location>
        <position position="172"/>
    </location>
    <ligand>
        <name>L-aspartate</name>
        <dbReference type="ChEBI" id="CHEBI:29991"/>
    </ligand>
</feature>
<feature type="binding site" evidence="1">
    <location>
        <begin position="218"/>
        <end position="220"/>
    </location>
    <ligand>
        <name>ATP</name>
        <dbReference type="ChEBI" id="CHEBI:30616"/>
    </ligand>
</feature>
<feature type="binding site" evidence="1">
    <location>
        <position position="218"/>
    </location>
    <ligand>
        <name>L-aspartate</name>
        <dbReference type="ChEBI" id="CHEBI:29991"/>
    </ligand>
</feature>
<feature type="binding site" evidence="1">
    <location>
        <position position="227"/>
    </location>
    <ligand>
        <name>ATP</name>
        <dbReference type="ChEBI" id="CHEBI:30616"/>
    </ligand>
</feature>
<feature type="binding site" evidence="1">
    <location>
        <position position="446"/>
    </location>
    <ligand>
        <name>L-aspartate</name>
        <dbReference type="ChEBI" id="CHEBI:29991"/>
    </ligand>
</feature>
<feature type="binding site" evidence="1">
    <location>
        <position position="480"/>
    </location>
    <ligand>
        <name>ATP</name>
        <dbReference type="ChEBI" id="CHEBI:30616"/>
    </ligand>
</feature>
<feature type="binding site" evidence="1">
    <location>
        <position position="487"/>
    </location>
    <ligand>
        <name>L-aspartate</name>
        <dbReference type="ChEBI" id="CHEBI:29991"/>
    </ligand>
</feature>
<feature type="binding site" evidence="1">
    <location>
        <begin position="532"/>
        <end position="535"/>
    </location>
    <ligand>
        <name>ATP</name>
        <dbReference type="ChEBI" id="CHEBI:30616"/>
    </ligand>
</feature>
<feature type="site" description="Important for tRNA non-discrimination" evidence="1">
    <location>
        <position position="30"/>
    </location>
</feature>
<protein>
    <recommendedName>
        <fullName evidence="1">Aspartate--tRNA(Asp/Asn) ligase</fullName>
        <ecNumber evidence="1">6.1.1.23</ecNumber>
    </recommendedName>
    <alternativeName>
        <fullName evidence="1">Aspartyl-tRNA synthetase 1</fullName>
        <shortName evidence="1">AspRS1</shortName>
    </alternativeName>
    <alternativeName>
        <fullName evidence="1">Non-discriminating aspartyl-tRNA synthetase</fullName>
        <shortName evidence="1">ND-AspRS</shortName>
    </alternativeName>
</protein>
<reference key="1">
    <citation type="journal article" date="2002" name="Proc. Natl. Acad. Sci. U.S.A.">
        <title>Genome sequence of Streptococcus mutans UA159, a cariogenic dental pathogen.</title>
        <authorList>
            <person name="Ajdic D.J."/>
            <person name="McShan W.M."/>
            <person name="McLaughlin R.E."/>
            <person name="Savic G."/>
            <person name="Chang J."/>
            <person name="Carson M.B."/>
            <person name="Primeaux C."/>
            <person name="Tian R."/>
            <person name="Kenton S."/>
            <person name="Jia H.G."/>
            <person name="Lin S.P."/>
            <person name="Qian Y."/>
            <person name="Li S."/>
            <person name="Zhu H."/>
            <person name="Najar F.Z."/>
            <person name="Lai H."/>
            <person name="White J."/>
            <person name="Roe B.A."/>
            <person name="Ferretti J.J."/>
        </authorList>
    </citation>
    <scope>NUCLEOTIDE SEQUENCE [LARGE SCALE GENOMIC DNA]</scope>
    <source>
        <strain>ATCC 700610 / UA159</strain>
    </source>
</reference>
<comment type="function">
    <text evidence="1">Aspartyl-tRNA synthetase with relaxed tRNA specificity since it is able to aspartylate not only its cognate tRNA(Asp) but also tRNA(Asn). Reaction proceeds in two steps: L-aspartate is first activated by ATP to form Asp-AMP and then transferred to the acceptor end of tRNA(Asp/Asn).</text>
</comment>
<comment type="catalytic activity">
    <reaction evidence="1">
        <text>tRNA(Asx) + L-aspartate + ATP = L-aspartyl-tRNA(Asx) + AMP + diphosphate</text>
        <dbReference type="Rhea" id="RHEA:18349"/>
        <dbReference type="Rhea" id="RHEA-COMP:9710"/>
        <dbReference type="Rhea" id="RHEA-COMP:9711"/>
        <dbReference type="ChEBI" id="CHEBI:29991"/>
        <dbReference type="ChEBI" id="CHEBI:30616"/>
        <dbReference type="ChEBI" id="CHEBI:33019"/>
        <dbReference type="ChEBI" id="CHEBI:78442"/>
        <dbReference type="ChEBI" id="CHEBI:78516"/>
        <dbReference type="ChEBI" id="CHEBI:456215"/>
        <dbReference type="EC" id="6.1.1.23"/>
    </reaction>
</comment>
<comment type="subunit">
    <text evidence="1">Homodimer.</text>
</comment>
<comment type="subcellular location">
    <subcellularLocation>
        <location evidence="1">Cytoplasm</location>
    </subcellularLocation>
</comment>
<comment type="similarity">
    <text evidence="1">Belongs to the class-II aminoacyl-tRNA synthetase family. Type 1 subfamily.</text>
</comment>
<evidence type="ECO:0000255" key="1">
    <source>
        <dbReference type="HAMAP-Rule" id="MF_00044"/>
    </source>
</evidence>
<gene>
    <name evidence="1" type="primary">aspS1</name>
    <name type="ordered locus">SMU_1822</name>
</gene>
<organism>
    <name type="scientific">Streptococcus mutans serotype c (strain ATCC 700610 / UA159)</name>
    <dbReference type="NCBI Taxonomy" id="210007"/>
    <lineage>
        <taxon>Bacteria</taxon>
        <taxon>Bacillati</taxon>
        <taxon>Bacillota</taxon>
        <taxon>Bacilli</taxon>
        <taxon>Lactobacillales</taxon>
        <taxon>Streptococcaceae</taxon>
        <taxon>Streptococcus</taxon>
    </lineage>
</organism>